<sequence>MDLLRLREKGIFLSQRRRKWLIFMAISGVSGYGAYKVYHLPSVARKRKRLFKLFGAIVSVAELISDSAETLSMVSRDVKDFLNSDSDEIPNSLKQIAKITTSNEFTDSLSRVSQAVTIGAFRGYKSESSIGDSGIEKSSDSSVVDRVIDKVFSEAGTGFVSVVVGSFAKNLVLGFYSGKVESGVKCEGSDSSETPRWVTLLGDDKCRELLADCIERFTSTAIGVYLDKTMDINTYDQIFEGLTNPKHQDSVKDVLVSVCNGALETIVRTSHDVFTSSRSKNVIEEIEDDDFKSNGSARSKMVSESGDGVKSNGWTEAIATTLAVPSNRRFMFDVTGRVTLETTRSIIAFIMVKTFQGFRKSINVVHEEVTDRGRQAVEYVGAKSSVIITVCLALYLHIISGCVRNSPIGVSQHF</sequence>
<reference key="1">
    <citation type="journal article" date="2000" name="Nature">
        <title>Sequence and analysis of chromosome 1 of the plant Arabidopsis thaliana.</title>
        <authorList>
            <person name="Theologis A."/>
            <person name="Ecker J.R."/>
            <person name="Palm C.J."/>
            <person name="Federspiel N.A."/>
            <person name="Kaul S."/>
            <person name="White O."/>
            <person name="Alonso J."/>
            <person name="Altafi H."/>
            <person name="Araujo R."/>
            <person name="Bowman C.L."/>
            <person name="Brooks S.Y."/>
            <person name="Buehler E."/>
            <person name="Chan A."/>
            <person name="Chao Q."/>
            <person name="Chen H."/>
            <person name="Cheuk R.F."/>
            <person name="Chin C.W."/>
            <person name="Chung M.K."/>
            <person name="Conn L."/>
            <person name="Conway A.B."/>
            <person name="Conway A.R."/>
            <person name="Creasy T.H."/>
            <person name="Dewar K."/>
            <person name="Dunn P."/>
            <person name="Etgu P."/>
            <person name="Feldblyum T.V."/>
            <person name="Feng J.-D."/>
            <person name="Fong B."/>
            <person name="Fujii C.Y."/>
            <person name="Gill J.E."/>
            <person name="Goldsmith A.D."/>
            <person name="Haas B."/>
            <person name="Hansen N.F."/>
            <person name="Hughes B."/>
            <person name="Huizar L."/>
            <person name="Hunter J.L."/>
            <person name="Jenkins J."/>
            <person name="Johnson-Hopson C."/>
            <person name="Khan S."/>
            <person name="Khaykin E."/>
            <person name="Kim C.J."/>
            <person name="Koo H.L."/>
            <person name="Kremenetskaia I."/>
            <person name="Kurtz D.B."/>
            <person name="Kwan A."/>
            <person name="Lam B."/>
            <person name="Langin-Hooper S."/>
            <person name="Lee A."/>
            <person name="Lee J.M."/>
            <person name="Lenz C.A."/>
            <person name="Li J.H."/>
            <person name="Li Y.-P."/>
            <person name="Lin X."/>
            <person name="Liu S.X."/>
            <person name="Liu Z.A."/>
            <person name="Luros J.S."/>
            <person name="Maiti R."/>
            <person name="Marziali A."/>
            <person name="Militscher J."/>
            <person name="Miranda M."/>
            <person name="Nguyen M."/>
            <person name="Nierman W.C."/>
            <person name="Osborne B.I."/>
            <person name="Pai G."/>
            <person name="Peterson J."/>
            <person name="Pham P.K."/>
            <person name="Rizzo M."/>
            <person name="Rooney T."/>
            <person name="Rowley D."/>
            <person name="Sakano H."/>
            <person name="Salzberg S.L."/>
            <person name="Schwartz J.R."/>
            <person name="Shinn P."/>
            <person name="Southwick A.M."/>
            <person name="Sun H."/>
            <person name="Tallon L.J."/>
            <person name="Tambunga G."/>
            <person name="Toriumi M.J."/>
            <person name="Town C.D."/>
            <person name="Utterback T."/>
            <person name="Van Aken S."/>
            <person name="Vaysberg M."/>
            <person name="Vysotskaia V.S."/>
            <person name="Walker M."/>
            <person name="Wu D."/>
            <person name="Yu G."/>
            <person name="Fraser C.M."/>
            <person name="Venter J.C."/>
            <person name="Davis R.W."/>
        </authorList>
    </citation>
    <scope>NUCLEOTIDE SEQUENCE [LARGE SCALE GENOMIC DNA]</scope>
    <source>
        <strain>cv. Columbia</strain>
    </source>
</reference>
<reference key="2">
    <citation type="journal article" date="2017" name="Plant J.">
        <title>Araport11: a complete reannotation of the Arabidopsis thaliana reference genome.</title>
        <authorList>
            <person name="Cheng C.Y."/>
            <person name="Krishnakumar V."/>
            <person name="Chan A.P."/>
            <person name="Thibaud-Nissen F."/>
            <person name="Schobel S."/>
            <person name="Town C.D."/>
        </authorList>
    </citation>
    <scope>GENOME REANNOTATION</scope>
    <source>
        <strain>cv. Columbia</strain>
    </source>
</reference>
<reference key="3">
    <citation type="submission" date="2006-07" db="EMBL/GenBank/DDBJ databases">
        <title>Large-scale analysis of RIKEN Arabidopsis full-length (RAFL) cDNAs.</title>
        <authorList>
            <person name="Totoki Y."/>
            <person name="Seki M."/>
            <person name="Ishida J."/>
            <person name="Nakajima M."/>
            <person name="Enju A."/>
            <person name="Kamiya A."/>
            <person name="Narusaka M."/>
            <person name="Shin-i T."/>
            <person name="Nakagawa M."/>
            <person name="Sakamoto N."/>
            <person name="Oishi K."/>
            <person name="Kohara Y."/>
            <person name="Kobayashi M."/>
            <person name="Toyoda A."/>
            <person name="Sakaki Y."/>
            <person name="Sakurai T."/>
            <person name="Iida K."/>
            <person name="Akiyama K."/>
            <person name="Satou M."/>
            <person name="Toyoda T."/>
            <person name="Konagaya A."/>
            <person name="Carninci P."/>
            <person name="Kawai J."/>
            <person name="Hayashizaki Y."/>
            <person name="Shinozaki K."/>
        </authorList>
    </citation>
    <scope>NUCLEOTIDE SEQUENCE [LARGE SCALE MRNA]</scope>
    <source>
        <strain>cv. Columbia</strain>
    </source>
</reference>
<reference key="4">
    <citation type="submission" date="2006-05" db="EMBL/GenBank/DDBJ databases">
        <title>Arabidopsis ORF clones.</title>
        <authorList>
            <person name="Shinn P."/>
            <person name="Chen H."/>
            <person name="Kim C.J."/>
            <person name="Quinitio C."/>
            <person name="Ecker J.R."/>
        </authorList>
    </citation>
    <scope>NUCLEOTIDE SEQUENCE [LARGE SCALE MRNA]</scope>
    <source>
        <strain>cv. Columbia</strain>
    </source>
</reference>
<reference key="5">
    <citation type="submission" date="2002-03" db="EMBL/GenBank/DDBJ databases">
        <title>Full-length cDNA from Arabidopsis thaliana.</title>
        <authorList>
            <person name="Brover V.V."/>
            <person name="Troukhan M.E."/>
            <person name="Alexandrov N.A."/>
            <person name="Lu Y.-P."/>
            <person name="Flavell R.B."/>
            <person name="Feldmann K.A."/>
        </authorList>
    </citation>
    <scope>NUCLEOTIDE SEQUENCE [LARGE SCALE MRNA]</scope>
</reference>
<reference key="6">
    <citation type="journal article" date="2003" name="Plant Physiol.">
        <title>Diversity of the superfamily of phloem lectins (phloem protein 2) in angiosperms.</title>
        <authorList>
            <person name="Dinant S."/>
            <person name="Clark A.M."/>
            <person name="Zhu Y."/>
            <person name="Vilaine F."/>
            <person name="Palauqui J.-C."/>
            <person name="Kusiak C."/>
            <person name="Thompson G.A."/>
        </authorList>
    </citation>
    <scope>GENE FAMILY</scope>
    <scope>NOMENCLATURE</scope>
</reference>
<keyword id="KW-0472">Membrane</keyword>
<keyword id="KW-1185">Reference proteome</keyword>
<keyword id="KW-0812">Transmembrane</keyword>
<keyword id="KW-1133">Transmembrane helix</keyword>
<dbReference type="EMBL" id="AC005489">
    <property type="protein sequence ID" value="AAD32865.1"/>
    <property type="molecule type" value="Genomic_DNA"/>
</dbReference>
<dbReference type="EMBL" id="CP002684">
    <property type="protein sequence ID" value="AEE28547.1"/>
    <property type="molecule type" value="Genomic_DNA"/>
</dbReference>
<dbReference type="EMBL" id="AK226314">
    <property type="protein sequence ID" value="BAE98466.1"/>
    <property type="molecule type" value="mRNA"/>
</dbReference>
<dbReference type="EMBL" id="BT025315">
    <property type="protein sequence ID" value="ABF47131.1"/>
    <property type="molecule type" value="mRNA"/>
</dbReference>
<dbReference type="EMBL" id="AY086524">
    <property type="protein sequence ID" value="AAM63523.1"/>
    <property type="molecule type" value="mRNA"/>
</dbReference>
<dbReference type="PIR" id="C86236">
    <property type="entry name" value="C86236"/>
</dbReference>
<dbReference type="RefSeq" id="NP_563862.1">
    <property type="nucleotide sequence ID" value="NM_100889.4"/>
</dbReference>
<dbReference type="FunCoup" id="Q9SY57">
    <property type="interactions" value="202"/>
</dbReference>
<dbReference type="STRING" id="3702.Q9SY57"/>
<dbReference type="GlyGen" id="Q9SY57">
    <property type="glycosylation" value="1 site"/>
</dbReference>
<dbReference type="PaxDb" id="3702-AT1G10150.1"/>
<dbReference type="ProteomicsDB" id="248690"/>
<dbReference type="EnsemblPlants" id="AT1G10150.1">
    <property type="protein sequence ID" value="AT1G10150.1"/>
    <property type="gene ID" value="AT1G10150"/>
</dbReference>
<dbReference type="GeneID" id="837552"/>
<dbReference type="Gramene" id="AT1G10150.1">
    <property type="protein sequence ID" value="AT1G10150.1"/>
    <property type="gene ID" value="AT1G10150"/>
</dbReference>
<dbReference type="KEGG" id="ath:AT1G10150"/>
<dbReference type="Araport" id="AT1G10150"/>
<dbReference type="TAIR" id="AT1G10150"/>
<dbReference type="eggNOG" id="ENOG502QRNR">
    <property type="taxonomic scope" value="Eukaryota"/>
</dbReference>
<dbReference type="HOGENOM" id="CLU_038216_0_0_1"/>
<dbReference type="InParanoid" id="Q9SY57"/>
<dbReference type="OMA" id="RCKVMIA"/>
<dbReference type="PhylomeDB" id="Q9SY57"/>
<dbReference type="PRO" id="PR:Q9SY57"/>
<dbReference type="Proteomes" id="UP000006548">
    <property type="component" value="Chromosome 1"/>
</dbReference>
<dbReference type="ExpressionAtlas" id="Q9SY57">
    <property type="expression patterns" value="baseline and differential"/>
</dbReference>
<dbReference type="GO" id="GO:0016020">
    <property type="term" value="C:membrane"/>
    <property type="evidence" value="ECO:0007669"/>
    <property type="project" value="UniProtKB-SubCell"/>
</dbReference>
<dbReference type="GO" id="GO:0030246">
    <property type="term" value="F:carbohydrate binding"/>
    <property type="evidence" value="ECO:0000250"/>
    <property type="project" value="TAIR"/>
</dbReference>
<dbReference type="InterPro" id="IPR019141">
    <property type="entry name" value="DUF2045"/>
</dbReference>
<dbReference type="PANTHER" id="PTHR21477:SF12">
    <property type="entry name" value="PROTEIN PHLOEM PROTEIN 2-LIKE A10"/>
    <property type="match status" value="1"/>
</dbReference>
<dbReference type="PANTHER" id="PTHR21477">
    <property type="entry name" value="ZGC:172139"/>
    <property type="match status" value="1"/>
</dbReference>
<protein>
    <recommendedName>
        <fullName>Protein PHLOEM PROTEIN 2-LIKE A10</fullName>
        <shortName>AtPP2-A10</shortName>
    </recommendedName>
</protein>
<organism>
    <name type="scientific">Arabidopsis thaliana</name>
    <name type="common">Mouse-ear cress</name>
    <dbReference type="NCBI Taxonomy" id="3702"/>
    <lineage>
        <taxon>Eukaryota</taxon>
        <taxon>Viridiplantae</taxon>
        <taxon>Streptophyta</taxon>
        <taxon>Embryophyta</taxon>
        <taxon>Tracheophyta</taxon>
        <taxon>Spermatophyta</taxon>
        <taxon>Magnoliopsida</taxon>
        <taxon>eudicotyledons</taxon>
        <taxon>Gunneridae</taxon>
        <taxon>Pentapetalae</taxon>
        <taxon>rosids</taxon>
        <taxon>malvids</taxon>
        <taxon>Brassicales</taxon>
        <taxon>Brassicaceae</taxon>
        <taxon>Camelineae</taxon>
        <taxon>Arabidopsis</taxon>
    </lineage>
</organism>
<proteinExistence type="evidence at transcript level"/>
<gene>
    <name type="primary">PP2A10</name>
    <name type="ordered locus">At1g10150</name>
    <name type="ORF">F14N23.3</name>
</gene>
<name>P2A10_ARATH</name>
<feature type="chain" id="PRO_0000285285" description="Protein PHLOEM PROTEIN 2-LIKE A10">
    <location>
        <begin position="1"/>
        <end position="414"/>
    </location>
</feature>
<feature type="transmembrane region" description="Helical" evidence="1">
    <location>
        <begin position="20"/>
        <end position="40"/>
    </location>
</feature>
<feature type="transmembrane region" description="Helical" evidence="1">
    <location>
        <begin position="379"/>
        <end position="399"/>
    </location>
</feature>
<feature type="sequence conflict" description="In Ref. 5; AAM63523." evidence="2" ref="5">
    <original>D</original>
    <variation>G</variation>
    <location>
        <position position="80"/>
    </location>
</feature>
<feature type="sequence conflict" description="In Ref. 5; AAM63523." evidence="2" ref="5">
    <original>V</original>
    <variation>A</variation>
    <location>
        <position position="282"/>
    </location>
</feature>
<evidence type="ECO:0000255" key="1"/>
<evidence type="ECO:0000305" key="2"/>
<accession>Q9SY57</accession>
<accession>Q8LCL9</accession>
<comment type="subcellular location">
    <subcellularLocation>
        <location evidence="2">Membrane</location>
        <topology evidence="2">Multi-pass membrane protein</topology>
    </subcellularLocation>
</comment>